<organism>
    <name type="scientific">Desulforamulus reducens (strain ATCC BAA-1160 / DSM 100696 / MI-1)</name>
    <name type="common">Desulfotomaculum reducens</name>
    <dbReference type="NCBI Taxonomy" id="349161"/>
    <lineage>
        <taxon>Bacteria</taxon>
        <taxon>Bacillati</taxon>
        <taxon>Bacillota</taxon>
        <taxon>Clostridia</taxon>
        <taxon>Eubacteriales</taxon>
        <taxon>Peptococcaceae</taxon>
        <taxon>Desulforamulus</taxon>
    </lineage>
</organism>
<evidence type="ECO:0000255" key="1">
    <source>
        <dbReference type="HAMAP-Rule" id="MF_00195"/>
    </source>
</evidence>
<proteinExistence type="inferred from homology"/>
<accession>A4J3P1</accession>
<name>DER_DESRM</name>
<dbReference type="EMBL" id="CP000612">
    <property type="protein sequence ID" value="ABO49694.1"/>
    <property type="molecule type" value="Genomic_DNA"/>
</dbReference>
<dbReference type="RefSeq" id="WP_011877520.1">
    <property type="nucleotide sequence ID" value="NC_009253.1"/>
</dbReference>
<dbReference type="SMR" id="A4J3P1"/>
<dbReference type="STRING" id="349161.Dred_1160"/>
<dbReference type="KEGG" id="drm:Dred_1160"/>
<dbReference type="eggNOG" id="COG1160">
    <property type="taxonomic scope" value="Bacteria"/>
</dbReference>
<dbReference type="HOGENOM" id="CLU_016077_6_2_9"/>
<dbReference type="OrthoDB" id="9805918at2"/>
<dbReference type="Proteomes" id="UP000001556">
    <property type="component" value="Chromosome"/>
</dbReference>
<dbReference type="GO" id="GO:0005525">
    <property type="term" value="F:GTP binding"/>
    <property type="evidence" value="ECO:0007669"/>
    <property type="project" value="UniProtKB-UniRule"/>
</dbReference>
<dbReference type="GO" id="GO:0043022">
    <property type="term" value="F:ribosome binding"/>
    <property type="evidence" value="ECO:0007669"/>
    <property type="project" value="TreeGrafter"/>
</dbReference>
<dbReference type="GO" id="GO:0042254">
    <property type="term" value="P:ribosome biogenesis"/>
    <property type="evidence" value="ECO:0007669"/>
    <property type="project" value="UniProtKB-KW"/>
</dbReference>
<dbReference type="CDD" id="cd01894">
    <property type="entry name" value="EngA1"/>
    <property type="match status" value="1"/>
</dbReference>
<dbReference type="CDD" id="cd01895">
    <property type="entry name" value="EngA2"/>
    <property type="match status" value="1"/>
</dbReference>
<dbReference type="FunFam" id="3.30.300.20:FF:000004">
    <property type="entry name" value="GTPase Der"/>
    <property type="match status" value="1"/>
</dbReference>
<dbReference type="FunFam" id="3.40.50.300:FF:000040">
    <property type="entry name" value="GTPase Der"/>
    <property type="match status" value="1"/>
</dbReference>
<dbReference type="FunFam" id="3.40.50.300:FF:000057">
    <property type="entry name" value="GTPase Der"/>
    <property type="match status" value="1"/>
</dbReference>
<dbReference type="Gene3D" id="3.30.300.20">
    <property type="match status" value="1"/>
</dbReference>
<dbReference type="Gene3D" id="3.40.50.300">
    <property type="entry name" value="P-loop containing nucleotide triphosphate hydrolases"/>
    <property type="match status" value="2"/>
</dbReference>
<dbReference type="HAMAP" id="MF_00195">
    <property type="entry name" value="GTPase_Der"/>
    <property type="match status" value="1"/>
</dbReference>
<dbReference type="InterPro" id="IPR031166">
    <property type="entry name" value="G_ENGA"/>
</dbReference>
<dbReference type="InterPro" id="IPR006073">
    <property type="entry name" value="GTP-bd"/>
</dbReference>
<dbReference type="InterPro" id="IPR016484">
    <property type="entry name" value="GTPase_Der"/>
</dbReference>
<dbReference type="InterPro" id="IPR032859">
    <property type="entry name" value="KH_dom-like"/>
</dbReference>
<dbReference type="InterPro" id="IPR015946">
    <property type="entry name" value="KH_dom-like_a/b"/>
</dbReference>
<dbReference type="InterPro" id="IPR027417">
    <property type="entry name" value="P-loop_NTPase"/>
</dbReference>
<dbReference type="InterPro" id="IPR005225">
    <property type="entry name" value="Small_GTP-bd"/>
</dbReference>
<dbReference type="NCBIfam" id="TIGR03594">
    <property type="entry name" value="GTPase_EngA"/>
    <property type="match status" value="1"/>
</dbReference>
<dbReference type="NCBIfam" id="TIGR00231">
    <property type="entry name" value="small_GTP"/>
    <property type="match status" value="2"/>
</dbReference>
<dbReference type="PANTHER" id="PTHR43834">
    <property type="entry name" value="GTPASE DER"/>
    <property type="match status" value="1"/>
</dbReference>
<dbReference type="PANTHER" id="PTHR43834:SF6">
    <property type="entry name" value="GTPASE DER"/>
    <property type="match status" value="1"/>
</dbReference>
<dbReference type="Pfam" id="PF14714">
    <property type="entry name" value="KH_dom-like"/>
    <property type="match status" value="1"/>
</dbReference>
<dbReference type="Pfam" id="PF01926">
    <property type="entry name" value="MMR_HSR1"/>
    <property type="match status" value="2"/>
</dbReference>
<dbReference type="PIRSF" id="PIRSF006485">
    <property type="entry name" value="GTP-binding_EngA"/>
    <property type="match status" value="1"/>
</dbReference>
<dbReference type="PRINTS" id="PR00326">
    <property type="entry name" value="GTP1OBG"/>
</dbReference>
<dbReference type="SUPFAM" id="SSF52540">
    <property type="entry name" value="P-loop containing nucleoside triphosphate hydrolases"/>
    <property type="match status" value="2"/>
</dbReference>
<dbReference type="PROSITE" id="PS51712">
    <property type="entry name" value="G_ENGA"/>
    <property type="match status" value="2"/>
</dbReference>
<feature type="chain" id="PRO_1000071702" description="GTPase Der">
    <location>
        <begin position="1"/>
        <end position="439"/>
    </location>
</feature>
<feature type="domain" description="EngA-type G 1">
    <location>
        <begin position="4"/>
        <end position="166"/>
    </location>
</feature>
<feature type="domain" description="EngA-type G 2">
    <location>
        <begin position="175"/>
        <end position="350"/>
    </location>
</feature>
<feature type="domain" description="KH-like" evidence="1">
    <location>
        <begin position="351"/>
        <end position="435"/>
    </location>
</feature>
<feature type="binding site" evidence="1">
    <location>
        <begin position="10"/>
        <end position="17"/>
    </location>
    <ligand>
        <name>GTP</name>
        <dbReference type="ChEBI" id="CHEBI:37565"/>
        <label>1</label>
    </ligand>
</feature>
<feature type="binding site" evidence="1">
    <location>
        <begin position="57"/>
        <end position="61"/>
    </location>
    <ligand>
        <name>GTP</name>
        <dbReference type="ChEBI" id="CHEBI:37565"/>
        <label>1</label>
    </ligand>
</feature>
<feature type="binding site" evidence="1">
    <location>
        <begin position="119"/>
        <end position="122"/>
    </location>
    <ligand>
        <name>GTP</name>
        <dbReference type="ChEBI" id="CHEBI:37565"/>
        <label>1</label>
    </ligand>
</feature>
<feature type="binding site" evidence="1">
    <location>
        <begin position="181"/>
        <end position="188"/>
    </location>
    <ligand>
        <name>GTP</name>
        <dbReference type="ChEBI" id="CHEBI:37565"/>
        <label>2</label>
    </ligand>
</feature>
<feature type="binding site" evidence="1">
    <location>
        <begin position="228"/>
        <end position="232"/>
    </location>
    <ligand>
        <name>GTP</name>
        <dbReference type="ChEBI" id="CHEBI:37565"/>
        <label>2</label>
    </ligand>
</feature>
<feature type="binding site" evidence="1">
    <location>
        <begin position="293"/>
        <end position="296"/>
    </location>
    <ligand>
        <name>GTP</name>
        <dbReference type="ChEBI" id="CHEBI:37565"/>
        <label>2</label>
    </ligand>
</feature>
<keyword id="KW-0342">GTP-binding</keyword>
<keyword id="KW-0547">Nucleotide-binding</keyword>
<keyword id="KW-1185">Reference proteome</keyword>
<keyword id="KW-0677">Repeat</keyword>
<keyword id="KW-0690">Ribosome biogenesis</keyword>
<protein>
    <recommendedName>
        <fullName evidence="1">GTPase Der</fullName>
    </recommendedName>
    <alternativeName>
        <fullName evidence="1">GTP-binding protein EngA</fullName>
    </alternativeName>
</protein>
<gene>
    <name evidence="1" type="primary">der</name>
    <name type="synonym">engA</name>
    <name type="ordered locus">Dred_1160</name>
</gene>
<comment type="function">
    <text evidence="1">GTPase that plays an essential role in the late steps of ribosome biogenesis.</text>
</comment>
<comment type="subunit">
    <text evidence="1">Associates with the 50S ribosomal subunit.</text>
</comment>
<comment type="similarity">
    <text evidence="1">Belongs to the TRAFAC class TrmE-Era-EngA-EngB-Septin-like GTPase superfamily. EngA (Der) GTPase family.</text>
</comment>
<sequence length="439" mass="49657">MPKPIVAIVGRPNVGKSTLFNRIVGARIAIVEDMPGVTRDRLYQDAEWQGREFTLVDTGGLDFAEDIITAQIRKQAELAIYEADIILFVVDAREGLTAIDEEVGRTLRRADKPVILVANKVEHFDKIPYYDFYQLGLGDPVPVSAAEGLNTGDLLDELVKNLPAQDEDPYPPDTIRIAVIGRPNVGKSSLVNTILGEERVIVSNIPGTTRDAIDSSFEKNGKNYVLVDTAGMRRRKKIDLPTERYSVVRALRAVDRCDVALMVFDATEGIAEQDKRIVGYAHEKGKAIILIINKWDLIEKDDKTMNRFEKKIREELAFLDYVPTLYISALTKQRVPKVLETVDFVAEEASKRVATADLNNLIREATQHNPPPADKHRRLKIFYATQGGVKPPTFILFVNEPEIMHFSYQRYLENKIRDTYGFKGTPIRFFLRKREGKDI</sequence>
<reference key="1">
    <citation type="submission" date="2007-03" db="EMBL/GenBank/DDBJ databases">
        <title>Complete sequence of Desulfotomaculum reducens MI-1.</title>
        <authorList>
            <consortium name="US DOE Joint Genome Institute"/>
            <person name="Copeland A."/>
            <person name="Lucas S."/>
            <person name="Lapidus A."/>
            <person name="Barry K."/>
            <person name="Detter J.C."/>
            <person name="Glavina del Rio T."/>
            <person name="Hammon N."/>
            <person name="Israni S."/>
            <person name="Dalin E."/>
            <person name="Tice H."/>
            <person name="Pitluck S."/>
            <person name="Sims D."/>
            <person name="Brettin T."/>
            <person name="Bruce D."/>
            <person name="Han C."/>
            <person name="Tapia R."/>
            <person name="Schmutz J."/>
            <person name="Larimer F."/>
            <person name="Land M."/>
            <person name="Hauser L."/>
            <person name="Kyrpides N."/>
            <person name="Kim E."/>
            <person name="Tebo B.M."/>
            <person name="Richardson P."/>
        </authorList>
    </citation>
    <scope>NUCLEOTIDE SEQUENCE [LARGE SCALE GENOMIC DNA]</scope>
    <source>
        <strain>ATCC BAA-1160 / DSM 100696 / MI-1</strain>
    </source>
</reference>